<name>C13AA_BACTU</name>
<feature type="chain" id="PRO_0000174086" description="Pesticidal crystal protein Cry13Aa">
    <location>
        <begin position="1"/>
        <end position="803"/>
    </location>
</feature>
<protein>
    <recommendedName>
        <fullName>Pesticidal crystal protein Cry13Aa</fullName>
    </recommendedName>
    <alternativeName>
        <fullName>88 kDa crystal protein</fullName>
    </alternativeName>
    <alternativeName>
        <fullName>Crystaline entomocidal protoxin</fullName>
    </alternativeName>
    <alternativeName>
        <fullName>Insecticidal delta-endotoxin CryXIIIA(a)</fullName>
    </alternativeName>
</protein>
<organism>
    <name type="scientific">Bacillus thuringiensis</name>
    <dbReference type="NCBI Taxonomy" id="1428"/>
    <lineage>
        <taxon>Bacteria</taxon>
        <taxon>Bacillati</taxon>
        <taxon>Bacillota</taxon>
        <taxon>Bacilli</taxon>
        <taxon>Bacillales</taxon>
        <taxon>Bacillaceae</taxon>
        <taxon>Bacillus</taxon>
        <taxon>Bacillus cereus group</taxon>
    </lineage>
</organism>
<evidence type="ECO:0000305" key="1"/>
<gene>
    <name type="primary">cry13Aa</name>
    <name type="synonym">cryVC</name>
    <name type="synonym">cryXIIIA(a)</name>
</gene>
<dbReference type="EMBL" id="L07023">
    <property type="protein sequence ID" value="AAA22356.1"/>
    <property type="molecule type" value="Genomic_DNA"/>
</dbReference>
<dbReference type="RefSeq" id="WP_065482087.1">
    <property type="nucleotide sequence ID" value="NZ_CP015350.1"/>
</dbReference>
<dbReference type="SMR" id="Q45755"/>
<dbReference type="TCDB" id="1.C.2.3.1">
    <property type="family name" value="the channel-forming Delta-endotoxin insecticidal crystal protein (icp) family"/>
</dbReference>
<dbReference type="GO" id="GO:0005102">
    <property type="term" value="F:signaling receptor binding"/>
    <property type="evidence" value="ECO:0007669"/>
    <property type="project" value="InterPro"/>
</dbReference>
<dbReference type="GO" id="GO:0090729">
    <property type="term" value="F:toxin activity"/>
    <property type="evidence" value="ECO:0007669"/>
    <property type="project" value="UniProtKB-KW"/>
</dbReference>
<dbReference type="GO" id="GO:0030435">
    <property type="term" value="P:sporulation resulting in formation of a cellular spore"/>
    <property type="evidence" value="ECO:0007669"/>
    <property type="project" value="UniProtKB-KW"/>
</dbReference>
<dbReference type="GO" id="GO:0001907">
    <property type="term" value="P:symbiont-mediated killing of host cell"/>
    <property type="evidence" value="ECO:0007669"/>
    <property type="project" value="InterPro"/>
</dbReference>
<dbReference type="CDD" id="cd04085">
    <property type="entry name" value="delta_endotoxin_C"/>
    <property type="match status" value="1"/>
</dbReference>
<dbReference type="Gene3D" id="2.100.10.40">
    <property type="match status" value="1"/>
</dbReference>
<dbReference type="Gene3D" id="2.60.120.260">
    <property type="entry name" value="Galactose-binding domain-like"/>
    <property type="match status" value="1"/>
</dbReference>
<dbReference type="Gene3D" id="1.20.190.10">
    <property type="entry name" value="Pesticidal crystal protein, N-terminal domain"/>
    <property type="match status" value="1"/>
</dbReference>
<dbReference type="InterPro" id="IPR008979">
    <property type="entry name" value="Galactose-bd-like_sf"/>
</dbReference>
<dbReference type="InterPro" id="IPR005638">
    <property type="entry name" value="Pest_crys_dom-III"/>
</dbReference>
<dbReference type="InterPro" id="IPR005639">
    <property type="entry name" value="Pest_crys_dom_I"/>
</dbReference>
<dbReference type="InterPro" id="IPR036716">
    <property type="entry name" value="Pest_crys_N_sf"/>
</dbReference>
<dbReference type="InterPro" id="IPR001178">
    <property type="entry name" value="Pest_cryst_dom_II"/>
</dbReference>
<dbReference type="Pfam" id="PF03944">
    <property type="entry name" value="Endotoxin_C"/>
    <property type="match status" value="1"/>
</dbReference>
<dbReference type="Pfam" id="PF00555">
    <property type="entry name" value="Endotoxin_M"/>
    <property type="match status" value="1"/>
</dbReference>
<dbReference type="Pfam" id="PF03945">
    <property type="entry name" value="Endotoxin_N"/>
    <property type="match status" value="1"/>
</dbReference>
<dbReference type="SUPFAM" id="SSF56849">
    <property type="entry name" value="delta-Endotoxin (insectocide), N-terminal domain"/>
    <property type="match status" value="1"/>
</dbReference>
<dbReference type="SUPFAM" id="SSF49785">
    <property type="entry name" value="Galactose-binding domain-like"/>
    <property type="match status" value="1"/>
</dbReference>
<keyword id="KW-0749">Sporulation</keyword>
<keyword id="KW-0800">Toxin</keyword>
<keyword id="KW-0843">Virulence</keyword>
<sequence length="803" mass="88143">MTCQLQAQPLIPYNVLAGVPTSNTGSPIGNAGNQFDQFEQTVKELKEAWEAFQKNGSFSLAALEKGFDAAIGGGSFDYLGLVQAGLGLVGTLGAAIPGVSVAVPLISMLVGVFWPKGTNNQENLITVIDKEVQRILDEKLSDQLIKKLNADLNAFTDLVTRLEEVIIDATFENHKPVLQVSKSNYMKVDSAYFSTGGILTLGMSDFLTDTYSKLTFPLYVLGATMKLSAYHSYIQFGNTWLNKVYDLSSDEGKTMSQALARAKQHMRQDIAFYTSQALNMFTGNLPSLSSNKYAINDYNVYTRAMVLNGLDIVATWPTLYPDDYSSQIKLEKTRVIFSDMVGQSESRDGSVTIKNIFDNTDSHQHGSIGLNSISYFPDELQKAQLRMYDYNHKPYCTDCFCWPYGVILNYNKNTFRYGDNDPGLSGDVQLPAPMSVVNAQTQTAQYTDGENIWTDTGRSWLCTLRGYCTTNCFPGRGCYNNSTGYGESCNQSLPGQKIHALYPFTQTNVLGQSGKLGLLASHIPYDLSPNNTIGDKDTDSTNIVAKGIPVEKGYASSGQKVEIIREWINGANVVQLSPGQSWGMDFTNSTGGQYMVRCRYASTNDTPIFFNLVYDGGSNPIYNQMTFPATKETPAHDSVDNKILGIKGINGNYSLMNVKDSVELPSGKFHVFFTNNGSSAIYLDRLEFVPLDQPAAPTQSTQPINYPITSRLPHRSGEPPAIIWEKSGNVRGNQLTISAQGVPENSQIYLSVGGDRQILDRSNGFKLVNYSPTYSFTNIQASSSNLVDITSGTITGQVQVSNL</sequence>
<proteinExistence type="evidence at transcript level"/>
<accession>Q45755</accession>
<reference key="1">
    <citation type="patent" date="1992-12-09" number="WO9219739">
        <title>Novel nematode-active toxins and genes which code therefor.</title>
        <authorList>
            <person name="Schnepf H.E."/>
            <person name="Schwab G.E."/>
            <person name="Payne J.M."/>
            <person name="Narva K.E."/>
            <person name="Foncerrada L."/>
        </authorList>
    </citation>
    <scope>NUCLEOTIDE SEQUENCE [GENOMIC DNA]</scope>
    <source>
        <strain>NRRL B-18246 / PS63B</strain>
    </source>
</reference>
<comment type="function">
    <text>Endotoxin with nematicidal activity.</text>
</comment>
<comment type="developmental stage">
    <text>The crystal protein is produced during sporulation and is accumulated both as an inclusion and as part of the spore coat.</text>
</comment>
<comment type="miscellaneous">
    <text>Toxic segment of the protein is located in the N-terminus.</text>
</comment>
<comment type="similarity">
    <text evidence="1">Belongs to the delta endotoxin family.</text>
</comment>